<sequence length="218" mass="24162">MNAAKVETSSMGMLQRADLTAADCLQEGEMGKKIQGKCFRIISTVSPVKLYCCYGVIMVLTVAVIALSVALSVRNKIPAMEDREPCYTACPSGWIGFGSKCFYFSEDMGNWTFSQSSCVASNSHLALFHSLEELNFLKRYKGTSDHWIGLHRASTQHPWIWTDNTEYSNLVLTRGGGECGFLSDNGISSGRSYTHRKWICSKFVSSCKSRVGSVPRHV</sequence>
<keyword id="KW-1003">Cell membrane</keyword>
<keyword id="KW-1015">Disulfide bond</keyword>
<keyword id="KW-0325">Glycoprotein</keyword>
<keyword id="KW-0430">Lectin</keyword>
<keyword id="KW-0472">Membrane</keyword>
<keyword id="KW-0675">Receptor</keyword>
<keyword id="KW-1185">Reference proteome</keyword>
<keyword id="KW-0735">Signal-anchor</keyword>
<keyword id="KW-0812">Transmembrane</keyword>
<keyword id="KW-1133">Transmembrane helix</keyword>
<comment type="function">
    <text evidence="1">Lectin-type cell surface receptor.</text>
</comment>
<comment type="subcellular location">
    <subcellularLocation>
        <location evidence="1">Cell membrane</location>
        <topology evidence="1">Single-pass type II membrane protein</topology>
    </subcellularLocation>
</comment>
<comment type="tissue specificity">
    <text evidence="4">Detected in ileum, liver, kidney and in IL2-activated natural killer cells.</text>
</comment>
<comment type="sequence caution" evidence="6">
    <conflict type="erroneous initiation">
        <sequence resource="EMBL-CDS" id="AAK70358"/>
    </conflict>
</comment>
<dbReference type="EMBL" id="AF350410">
    <property type="protein sequence ID" value="AAK70358.1"/>
    <property type="status" value="ALT_INIT"/>
    <property type="molecule type" value="mRNA"/>
</dbReference>
<dbReference type="EMBL" id="AK090364">
    <property type="protein sequence ID" value="BAC41184.1"/>
    <property type="molecule type" value="mRNA"/>
</dbReference>
<dbReference type="EMBL" id="BC021766">
    <property type="protein sequence ID" value="AAH21766.2"/>
    <property type="molecule type" value="mRNA"/>
</dbReference>
<dbReference type="CCDS" id="CCDS20576.1"/>
<dbReference type="RefSeq" id="NP_444395.2">
    <property type="nucleotide sequence ID" value="NM_053165.5"/>
</dbReference>
<dbReference type="SMR" id="Q8C1T8"/>
<dbReference type="FunCoup" id="Q8C1T8">
    <property type="interactions" value="237"/>
</dbReference>
<dbReference type="STRING" id="10090.ENSMUSP00000032518"/>
<dbReference type="GlyCosmos" id="Q8C1T8">
    <property type="glycosylation" value="1 site, No reported glycans"/>
</dbReference>
<dbReference type="GlyGen" id="Q8C1T8">
    <property type="glycosylation" value="1 site"/>
</dbReference>
<dbReference type="iPTMnet" id="Q8C1T8"/>
<dbReference type="PhosphoSitePlus" id="Q8C1T8"/>
<dbReference type="PaxDb" id="10090-ENSMUSP00000032518"/>
<dbReference type="ProteomicsDB" id="283365"/>
<dbReference type="DNASU" id="94071"/>
<dbReference type="Ensembl" id="ENSMUST00000032518.7">
    <property type="protein sequence ID" value="ENSMUSP00000032518.5"/>
    <property type="gene ID" value="ENSMUSG00000030364.7"/>
</dbReference>
<dbReference type="GeneID" id="94071"/>
<dbReference type="KEGG" id="mmu:94071"/>
<dbReference type="UCSC" id="uc009eek.2">
    <property type="organism name" value="mouse"/>
</dbReference>
<dbReference type="AGR" id="MGI:2136934"/>
<dbReference type="CTD" id="94071"/>
<dbReference type="MGI" id="MGI:2136934">
    <property type="gene designation" value="Clec2h"/>
</dbReference>
<dbReference type="VEuPathDB" id="HostDB:ENSMUSG00000030364"/>
<dbReference type="eggNOG" id="KOG4297">
    <property type="taxonomic scope" value="Eukaryota"/>
</dbReference>
<dbReference type="GeneTree" id="ENSGT00940000155319"/>
<dbReference type="HOGENOM" id="CLU_049894_8_1_1"/>
<dbReference type="InParanoid" id="Q8C1T8"/>
<dbReference type="OMA" id="HHIWRWT"/>
<dbReference type="OrthoDB" id="9906043at2759"/>
<dbReference type="PhylomeDB" id="Q8C1T8"/>
<dbReference type="TreeFam" id="TF351467"/>
<dbReference type="BioGRID-ORCS" id="94071">
    <property type="hits" value="0 hits in 76 CRISPR screens"/>
</dbReference>
<dbReference type="ChiTaRS" id="Clec2h">
    <property type="organism name" value="mouse"/>
</dbReference>
<dbReference type="PRO" id="PR:Q8C1T8"/>
<dbReference type="Proteomes" id="UP000000589">
    <property type="component" value="Chromosome 6"/>
</dbReference>
<dbReference type="RNAct" id="Q8C1T8">
    <property type="molecule type" value="protein"/>
</dbReference>
<dbReference type="Bgee" id="ENSMUSG00000030364">
    <property type="expression patterns" value="Expressed in epithelium of small intestine and 63 other cell types or tissues"/>
</dbReference>
<dbReference type="ExpressionAtlas" id="Q8C1T8">
    <property type="expression patterns" value="baseline and differential"/>
</dbReference>
<dbReference type="GO" id="GO:0005886">
    <property type="term" value="C:plasma membrane"/>
    <property type="evidence" value="ECO:0000304"/>
    <property type="project" value="MGI"/>
</dbReference>
<dbReference type="GO" id="GO:0030246">
    <property type="term" value="F:carbohydrate binding"/>
    <property type="evidence" value="ECO:0000250"/>
    <property type="project" value="MGI"/>
</dbReference>
<dbReference type="GO" id="GO:0046703">
    <property type="term" value="F:natural killer cell lectin-like receptor binding"/>
    <property type="evidence" value="ECO:0000353"/>
    <property type="project" value="MGI"/>
</dbReference>
<dbReference type="GO" id="GO:0004888">
    <property type="term" value="F:transmembrane signaling receptor activity"/>
    <property type="evidence" value="ECO:0000250"/>
    <property type="project" value="MGI"/>
</dbReference>
<dbReference type="GO" id="GO:0006968">
    <property type="term" value="P:cellular defense response"/>
    <property type="evidence" value="ECO:0000304"/>
    <property type="project" value="MGI"/>
</dbReference>
<dbReference type="CDD" id="cd03593">
    <property type="entry name" value="CLECT_NK_receptors_like"/>
    <property type="match status" value="1"/>
</dbReference>
<dbReference type="Gene3D" id="3.10.100.10">
    <property type="entry name" value="Mannose-Binding Protein A, subunit A"/>
    <property type="match status" value="1"/>
</dbReference>
<dbReference type="InterPro" id="IPR001304">
    <property type="entry name" value="C-type_lectin-like"/>
</dbReference>
<dbReference type="InterPro" id="IPR016186">
    <property type="entry name" value="C-type_lectin-like/link_sf"/>
</dbReference>
<dbReference type="InterPro" id="IPR050828">
    <property type="entry name" value="C-type_lectin/matrix_domain"/>
</dbReference>
<dbReference type="InterPro" id="IPR016187">
    <property type="entry name" value="CTDL_fold"/>
</dbReference>
<dbReference type="InterPro" id="IPR033992">
    <property type="entry name" value="NKR-like_CTLD"/>
</dbReference>
<dbReference type="PANTHER" id="PTHR45710:SF37">
    <property type="entry name" value="C-TYPE LECTIN DOMAIN FAMILY 2 MEMBER H"/>
    <property type="match status" value="1"/>
</dbReference>
<dbReference type="PANTHER" id="PTHR45710">
    <property type="entry name" value="C-TYPE LECTIN DOMAIN-CONTAINING PROTEIN 180"/>
    <property type="match status" value="1"/>
</dbReference>
<dbReference type="Pfam" id="PF00059">
    <property type="entry name" value="Lectin_C"/>
    <property type="match status" value="1"/>
</dbReference>
<dbReference type="SMART" id="SM00034">
    <property type="entry name" value="CLECT"/>
    <property type="match status" value="1"/>
</dbReference>
<dbReference type="SUPFAM" id="SSF56436">
    <property type="entry name" value="C-type lectin-like"/>
    <property type="match status" value="1"/>
</dbReference>
<dbReference type="PROSITE" id="PS50041">
    <property type="entry name" value="C_TYPE_LECTIN_2"/>
    <property type="match status" value="1"/>
</dbReference>
<accession>Q8C1T8</accession>
<accession>Q78IZ7</accession>
<accession>Q924B2</accession>
<protein>
    <recommendedName>
        <fullName>C-type lectin domain family 2 member H</fullName>
    </recommendedName>
    <alternativeName>
        <fullName>C-type lectin-related protein F</fullName>
        <shortName>Clr-f</shortName>
    </alternativeName>
</protein>
<evidence type="ECO:0000250" key="1"/>
<evidence type="ECO:0000255" key="2"/>
<evidence type="ECO:0000255" key="3">
    <source>
        <dbReference type="PROSITE-ProRule" id="PRU00040"/>
    </source>
</evidence>
<evidence type="ECO:0000269" key="4">
    <source>
    </source>
</evidence>
<evidence type="ECO:0000269" key="5">
    <source>
    </source>
</evidence>
<evidence type="ECO:0000305" key="6"/>
<feature type="chain" id="PRO_0000315290" description="C-type lectin domain family 2 member H">
    <location>
        <begin position="1"/>
        <end position="218"/>
    </location>
</feature>
<feature type="topological domain" description="Cytoplasmic" evidence="2">
    <location>
        <begin position="1"/>
        <end position="52"/>
    </location>
</feature>
<feature type="transmembrane region" description="Helical; Signal-anchor for type II membrane protein" evidence="2">
    <location>
        <begin position="53"/>
        <end position="73"/>
    </location>
</feature>
<feature type="topological domain" description="Extracellular" evidence="2">
    <location>
        <begin position="74"/>
        <end position="218"/>
    </location>
</feature>
<feature type="domain" description="C-type lectin" evidence="3">
    <location>
        <begin position="97"/>
        <end position="201"/>
    </location>
</feature>
<feature type="glycosylation site" description="N-linked (GlcNAc...) asparagine" evidence="2">
    <location>
        <position position="110"/>
    </location>
</feature>
<feature type="disulfide bond" evidence="3">
    <location>
        <begin position="90"/>
        <end position="101"/>
    </location>
</feature>
<feature type="disulfide bond" evidence="3">
    <location>
        <begin position="118"/>
        <end position="200"/>
    </location>
</feature>
<feature type="sequence variant" description="In strain: FVB/N." evidence="5">
    <original>T</original>
    <variation>M</variation>
    <location>
        <position position="8"/>
    </location>
</feature>
<gene>
    <name type="primary">Clec2h</name>
    <name type="synonym">Clrf</name>
</gene>
<proteinExistence type="evidence at transcript level"/>
<organism>
    <name type="scientific">Mus musculus</name>
    <name type="common">Mouse</name>
    <dbReference type="NCBI Taxonomy" id="10090"/>
    <lineage>
        <taxon>Eukaryota</taxon>
        <taxon>Metazoa</taxon>
        <taxon>Chordata</taxon>
        <taxon>Craniata</taxon>
        <taxon>Vertebrata</taxon>
        <taxon>Euteleostomi</taxon>
        <taxon>Mammalia</taxon>
        <taxon>Eutheria</taxon>
        <taxon>Euarchontoglires</taxon>
        <taxon>Glires</taxon>
        <taxon>Rodentia</taxon>
        <taxon>Myomorpha</taxon>
        <taxon>Muroidea</taxon>
        <taxon>Muridae</taxon>
        <taxon>Murinae</taxon>
        <taxon>Mus</taxon>
        <taxon>Mus</taxon>
    </lineage>
</organism>
<reference key="1">
    <citation type="journal article" date="2001" name="Immunogenetics">
        <title>Cloning of Clr, a new family of lectin-like genes localized between mouse Nkrp1a and Cd69.</title>
        <authorList>
            <person name="Plougastel B."/>
            <person name="Dubbelde C."/>
            <person name="Yokoyama W.M."/>
        </authorList>
    </citation>
    <scope>NUCLEOTIDE SEQUENCE [MRNA]</scope>
    <scope>TISSUE SPECIFICITY</scope>
    <source>
        <strain>C57BL/6J</strain>
        <tissue>Natural killer cell</tissue>
    </source>
</reference>
<reference key="2">
    <citation type="journal article" date="2005" name="Science">
        <title>The transcriptional landscape of the mammalian genome.</title>
        <authorList>
            <person name="Carninci P."/>
            <person name="Kasukawa T."/>
            <person name="Katayama S."/>
            <person name="Gough J."/>
            <person name="Frith M.C."/>
            <person name="Maeda N."/>
            <person name="Oyama R."/>
            <person name="Ravasi T."/>
            <person name="Lenhard B."/>
            <person name="Wells C."/>
            <person name="Kodzius R."/>
            <person name="Shimokawa K."/>
            <person name="Bajic V.B."/>
            <person name="Brenner S.E."/>
            <person name="Batalov S."/>
            <person name="Forrest A.R."/>
            <person name="Zavolan M."/>
            <person name="Davis M.J."/>
            <person name="Wilming L.G."/>
            <person name="Aidinis V."/>
            <person name="Allen J.E."/>
            <person name="Ambesi-Impiombato A."/>
            <person name="Apweiler R."/>
            <person name="Aturaliya R.N."/>
            <person name="Bailey T.L."/>
            <person name="Bansal M."/>
            <person name="Baxter L."/>
            <person name="Beisel K.W."/>
            <person name="Bersano T."/>
            <person name="Bono H."/>
            <person name="Chalk A.M."/>
            <person name="Chiu K.P."/>
            <person name="Choudhary V."/>
            <person name="Christoffels A."/>
            <person name="Clutterbuck D.R."/>
            <person name="Crowe M.L."/>
            <person name="Dalla E."/>
            <person name="Dalrymple B.P."/>
            <person name="de Bono B."/>
            <person name="Della Gatta G."/>
            <person name="di Bernardo D."/>
            <person name="Down T."/>
            <person name="Engstrom P."/>
            <person name="Fagiolini M."/>
            <person name="Faulkner G."/>
            <person name="Fletcher C.F."/>
            <person name="Fukushima T."/>
            <person name="Furuno M."/>
            <person name="Futaki S."/>
            <person name="Gariboldi M."/>
            <person name="Georgii-Hemming P."/>
            <person name="Gingeras T.R."/>
            <person name="Gojobori T."/>
            <person name="Green R.E."/>
            <person name="Gustincich S."/>
            <person name="Harbers M."/>
            <person name="Hayashi Y."/>
            <person name="Hensch T.K."/>
            <person name="Hirokawa N."/>
            <person name="Hill D."/>
            <person name="Huminiecki L."/>
            <person name="Iacono M."/>
            <person name="Ikeo K."/>
            <person name="Iwama A."/>
            <person name="Ishikawa T."/>
            <person name="Jakt M."/>
            <person name="Kanapin A."/>
            <person name="Katoh M."/>
            <person name="Kawasawa Y."/>
            <person name="Kelso J."/>
            <person name="Kitamura H."/>
            <person name="Kitano H."/>
            <person name="Kollias G."/>
            <person name="Krishnan S.P."/>
            <person name="Kruger A."/>
            <person name="Kummerfeld S.K."/>
            <person name="Kurochkin I.V."/>
            <person name="Lareau L.F."/>
            <person name="Lazarevic D."/>
            <person name="Lipovich L."/>
            <person name="Liu J."/>
            <person name="Liuni S."/>
            <person name="McWilliam S."/>
            <person name="Madan Babu M."/>
            <person name="Madera M."/>
            <person name="Marchionni L."/>
            <person name="Matsuda H."/>
            <person name="Matsuzawa S."/>
            <person name="Miki H."/>
            <person name="Mignone F."/>
            <person name="Miyake S."/>
            <person name="Morris K."/>
            <person name="Mottagui-Tabar S."/>
            <person name="Mulder N."/>
            <person name="Nakano N."/>
            <person name="Nakauchi H."/>
            <person name="Ng P."/>
            <person name="Nilsson R."/>
            <person name="Nishiguchi S."/>
            <person name="Nishikawa S."/>
            <person name="Nori F."/>
            <person name="Ohara O."/>
            <person name="Okazaki Y."/>
            <person name="Orlando V."/>
            <person name="Pang K.C."/>
            <person name="Pavan W.J."/>
            <person name="Pavesi G."/>
            <person name="Pesole G."/>
            <person name="Petrovsky N."/>
            <person name="Piazza S."/>
            <person name="Reed J."/>
            <person name="Reid J.F."/>
            <person name="Ring B.Z."/>
            <person name="Ringwald M."/>
            <person name="Rost B."/>
            <person name="Ruan Y."/>
            <person name="Salzberg S.L."/>
            <person name="Sandelin A."/>
            <person name="Schneider C."/>
            <person name="Schoenbach C."/>
            <person name="Sekiguchi K."/>
            <person name="Semple C.A."/>
            <person name="Seno S."/>
            <person name="Sessa L."/>
            <person name="Sheng Y."/>
            <person name="Shibata Y."/>
            <person name="Shimada H."/>
            <person name="Shimada K."/>
            <person name="Silva D."/>
            <person name="Sinclair B."/>
            <person name="Sperling S."/>
            <person name="Stupka E."/>
            <person name="Sugiura K."/>
            <person name="Sultana R."/>
            <person name="Takenaka Y."/>
            <person name="Taki K."/>
            <person name="Tammoja K."/>
            <person name="Tan S.L."/>
            <person name="Tang S."/>
            <person name="Taylor M.S."/>
            <person name="Tegner J."/>
            <person name="Teichmann S.A."/>
            <person name="Ueda H.R."/>
            <person name="van Nimwegen E."/>
            <person name="Verardo R."/>
            <person name="Wei C.L."/>
            <person name="Yagi K."/>
            <person name="Yamanishi H."/>
            <person name="Zabarovsky E."/>
            <person name="Zhu S."/>
            <person name="Zimmer A."/>
            <person name="Hide W."/>
            <person name="Bult C."/>
            <person name="Grimmond S.M."/>
            <person name="Teasdale R.D."/>
            <person name="Liu E.T."/>
            <person name="Brusic V."/>
            <person name="Quackenbush J."/>
            <person name="Wahlestedt C."/>
            <person name="Mattick J.S."/>
            <person name="Hume D.A."/>
            <person name="Kai C."/>
            <person name="Sasaki D."/>
            <person name="Tomaru Y."/>
            <person name="Fukuda S."/>
            <person name="Kanamori-Katayama M."/>
            <person name="Suzuki M."/>
            <person name="Aoki J."/>
            <person name="Arakawa T."/>
            <person name="Iida J."/>
            <person name="Imamura K."/>
            <person name="Itoh M."/>
            <person name="Kato T."/>
            <person name="Kawaji H."/>
            <person name="Kawagashira N."/>
            <person name="Kawashima T."/>
            <person name="Kojima M."/>
            <person name="Kondo S."/>
            <person name="Konno H."/>
            <person name="Nakano K."/>
            <person name="Ninomiya N."/>
            <person name="Nishio T."/>
            <person name="Okada M."/>
            <person name="Plessy C."/>
            <person name="Shibata K."/>
            <person name="Shiraki T."/>
            <person name="Suzuki S."/>
            <person name="Tagami M."/>
            <person name="Waki K."/>
            <person name="Watahiki A."/>
            <person name="Okamura-Oho Y."/>
            <person name="Suzuki H."/>
            <person name="Kawai J."/>
            <person name="Hayashizaki Y."/>
        </authorList>
    </citation>
    <scope>NUCLEOTIDE SEQUENCE [LARGE SCALE MRNA]</scope>
    <source>
        <strain>C57BL/6J</strain>
        <tissue>Intestinal mucosa</tissue>
    </source>
</reference>
<reference key="3">
    <citation type="journal article" date="2004" name="Genome Res.">
        <title>The status, quality, and expansion of the NIH full-length cDNA project: the Mammalian Gene Collection (MGC).</title>
        <authorList>
            <consortium name="The MGC Project Team"/>
        </authorList>
    </citation>
    <scope>NUCLEOTIDE SEQUENCE [LARGE SCALE MRNA]</scope>
    <scope>VARIANT MET-8</scope>
    <source>
        <strain>FVB/N</strain>
        <tissue>Kidney</tissue>
    </source>
</reference>
<name>CLC2H_MOUSE</name>